<name>FBXL7_HUMAN</name>
<protein>
    <recommendedName>
        <fullName>F-box/LRR-repeat protein 7</fullName>
    </recommendedName>
    <alternativeName>
        <fullName>F-box and leucine-rich repeat protein 7</fullName>
    </alternativeName>
    <alternativeName>
        <fullName>F-box protein FBL6/FBL7</fullName>
    </alternativeName>
</protein>
<sequence>MGANNGKQYGSEGKGSSSISSDVSSSTDHTPTKAQKNVATSEDSDLSMRTLSTPSPALICPPNLPGFQNGRGSSTSSSSITGETVAMVHSPPPTRLTHPLIRLASRPQKEQASIDRLPDHSMVQIFSFLPTNQLCRCARVCRRWYNLAWDPRLWRTIRLTGETINVDRALKVLTRRLCQDTPNVCLMLETVTVSGCRRLTDRGLYTIAQCCPELRRLEVSGCYNISNEAVFDVVSLCPNLEHLDVSGCSKVTCISLTREASIKLSPLHGKQISIRYLDMTDCFVLEDEGLHTIAAHCTQLTHLYLRRCVRLTDEGLRYLVIYCASIKELSVSDCRFVSDFGLREIAKLESRLRYLSIAHCGRVTDVGIRYVAKYCSKLRYLNARGCEGITDHGVEYLAKNCTKLKSLDIGKCPLVSDTGLECLALNCFNLKRLSLKSCESITGQGLQIVAANCFDLQTLNVQDCEVSVEALRFVKRHCKRCVIEHTNPAFF</sequence>
<gene>
    <name type="primary">FBXL7</name>
    <name type="synonym">FBL6</name>
    <name type="synonym">FBL7</name>
    <name type="synonym">KIAA0840</name>
</gene>
<dbReference type="EMBL" id="AF199356">
    <property type="protein sequence ID" value="AAF09248.1"/>
    <property type="molecule type" value="mRNA"/>
</dbReference>
<dbReference type="EMBL" id="AB020647">
    <property type="protein sequence ID" value="BAA74863.2"/>
    <property type="status" value="ALT_INIT"/>
    <property type="molecule type" value="mRNA"/>
</dbReference>
<dbReference type="EMBL" id="AC091970">
    <property type="status" value="NOT_ANNOTATED_CDS"/>
    <property type="molecule type" value="Genomic_DNA"/>
</dbReference>
<dbReference type="EMBL" id="AC091872">
    <property type="status" value="NOT_ANNOTATED_CDS"/>
    <property type="molecule type" value="Genomic_DNA"/>
</dbReference>
<dbReference type="EMBL" id="AC027332">
    <property type="status" value="NOT_ANNOTATED_CDS"/>
    <property type="molecule type" value="Genomic_DNA"/>
</dbReference>
<dbReference type="EMBL" id="AC010638">
    <property type="status" value="NOT_ANNOTATED_CDS"/>
    <property type="molecule type" value="Genomic_DNA"/>
</dbReference>
<dbReference type="EMBL" id="AC010477">
    <property type="status" value="NOT_ANNOTATED_CDS"/>
    <property type="molecule type" value="Genomic_DNA"/>
</dbReference>
<dbReference type="EMBL" id="CH471102">
    <property type="protein sequence ID" value="EAX08029.1"/>
    <property type="molecule type" value="Genomic_DNA"/>
</dbReference>
<dbReference type="EMBL" id="BC075061">
    <property type="protein sequence ID" value="AAH75061.1"/>
    <property type="molecule type" value="mRNA"/>
</dbReference>
<dbReference type="EMBL" id="BC136424">
    <property type="protein sequence ID" value="AAI36425.1"/>
    <property type="molecule type" value="mRNA"/>
</dbReference>
<dbReference type="EMBL" id="AF174593">
    <property type="protein sequence ID" value="AAF04514.1"/>
    <property type="molecule type" value="mRNA"/>
</dbReference>
<dbReference type="CCDS" id="CCDS54833.1">
    <molecule id="Q9UJT9-1"/>
</dbReference>
<dbReference type="CCDS" id="CCDS64129.1">
    <molecule id="Q9UJT9-2"/>
</dbReference>
<dbReference type="RefSeq" id="NP_001265246.1">
    <molecule id="Q9UJT9-2"/>
    <property type="nucleotide sequence ID" value="NM_001278317.2"/>
</dbReference>
<dbReference type="RefSeq" id="NP_036436.1">
    <molecule id="Q9UJT9-1"/>
    <property type="nucleotide sequence ID" value="NM_012304.5"/>
</dbReference>
<dbReference type="RefSeq" id="XP_011512300.1">
    <molecule id="Q9UJT9-2"/>
    <property type="nucleotide sequence ID" value="XM_011513998.2"/>
</dbReference>
<dbReference type="RefSeq" id="XP_047272956.1">
    <molecule id="Q9UJT9-2"/>
    <property type="nucleotide sequence ID" value="XM_047417000.1"/>
</dbReference>
<dbReference type="RefSeq" id="XP_054208147.1">
    <molecule id="Q9UJT9-2"/>
    <property type="nucleotide sequence ID" value="XM_054352172.1"/>
</dbReference>
<dbReference type="RefSeq" id="XP_054208148.1">
    <molecule id="Q9UJT9-2"/>
    <property type="nucleotide sequence ID" value="XM_054352173.1"/>
</dbReference>
<dbReference type="SMR" id="Q9UJT9"/>
<dbReference type="BioGRID" id="116803">
    <property type="interactions" value="25"/>
</dbReference>
<dbReference type="ComplexPortal" id="CPX-2683">
    <property type="entry name" value="SCF E3 ubiquitin ligase complex, FBXL7 variant"/>
</dbReference>
<dbReference type="FunCoup" id="Q9UJT9">
    <property type="interactions" value="121"/>
</dbReference>
<dbReference type="IntAct" id="Q9UJT9">
    <property type="interactions" value="7"/>
</dbReference>
<dbReference type="STRING" id="9606.ENSP00000423630"/>
<dbReference type="GlyGen" id="Q9UJT9">
    <property type="glycosylation" value="1 site, 1 O-linked glycan (1 site)"/>
</dbReference>
<dbReference type="iPTMnet" id="Q9UJT9"/>
<dbReference type="PhosphoSitePlus" id="Q9UJT9"/>
<dbReference type="BioMuta" id="FBXL7"/>
<dbReference type="DMDM" id="37537858"/>
<dbReference type="MassIVE" id="Q9UJT9"/>
<dbReference type="PaxDb" id="9606-ENSP00000423630"/>
<dbReference type="PeptideAtlas" id="Q9UJT9"/>
<dbReference type="ProteomicsDB" id="14203"/>
<dbReference type="ProteomicsDB" id="84649">
    <molecule id="Q9UJT9-1"/>
</dbReference>
<dbReference type="Antibodypedia" id="5190">
    <property type="antibodies" value="64 antibodies from 19 providers"/>
</dbReference>
<dbReference type="DNASU" id="23194"/>
<dbReference type="Ensembl" id="ENST00000504595.2">
    <molecule id="Q9UJT9-1"/>
    <property type="protein sequence ID" value="ENSP00000423630.1"/>
    <property type="gene ID" value="ENSG00000183580.10"/>
</dbReference>
<dbReference type="Ensembl" id="ENST00000510662.1">
    <molecule id="Q9UJT9-2"/>
    <property type="protein sequence ID" value="ENSP00000425184.1"/>
    <property type="gene ID" value="ENSG00000183580.10"/>
</dbReference>
<dbReference type="GeneID" id="23194"/>
<dbReference type="KEGG" id="hsa:23194"/>
<dbReference type="MANE-Select" id="ENST00000504595.2">
    <property type="protein sequence ID" value="ENSP00000423630.1"/>
    <property type="RefSeq nucleotide sequence ID" value="NM_012304.5"/>
    <property type="RefSeq protein sequence ID" value="NP_036436.1"/>
</dbReference>
<dbReference type="UCSC" id="uc003jfn.3">
    <molecule id="Q9UJT9-1"/>
    <property type="organism name" value="human"/>
</dbReference>
<dbReference type="AGR" id="HGNC:13604"/>
<dbReference type="CTD" id="23194"/>
<dbReference type="DisGeNET" id="23194"/>
<dbReference type="GeneCards" id="FBXL7"/>
<dbReference type="HGNC" id="HGNC:13604">
    <property type="gene designation" value="FBXL7"/>
</dbReference>
<dbReference type="HPA" id="ENSG00000183580">
    <property type="expression patterns" value="Low tissue specificity"/>
</dbReference>
<dbReference type="MIM" id="605656">
    <property type="type" value="gene"/>
</dbReference>
<dbReference type="neXtProt" id="NX_Q9UJT9"/>
<dbReference type="OpenTargets" id="ENSG00000183580"/>
<dbReference type="PharmGKB" id="PA28027"/>
<dbReference type="VEuPathDB" id="HostDB:ENSG00000183580"/>
<dbReference type="eggNOG" id="KOG1947">
    <property type="taxonomic scope" value="Eukaryota"/>
</dbReference>
<dbReference type="GeneTree" id="ENSGT00940000158009"/>
<dbReference type="HOGENOM" id="CLU_016072_5_0_1"/>
<dbReference type="InParanoid" id="Q9UJT9"/>
<dbReference type="OMA" id="ETVHVDR"/>
<dbReference type="OrthoDB" id="423607at2759"/>
<dbReference type="PAN-GO" id="Q9UJT9">
    <property type="GO annotations" value="2 GO annotations based on evolutionary models"/>
</dbReference>
<dbReference type="PhylomeDB" id="Q9UJT9"/>
<dbReference type="TreeFam" id="TF313434"/>
<dbReference type="PathwayCommons" id="Q9UJT9"/>
<dbReference type="Reactome" id="R-HSA-8854050">
    <property type="pathway name" value="FBXL7 down-regulates AURKA during mitotic entry and in early mitosis"/>
</dbReference>
<dbReference type="Reactome" id="R-HSA-8951664">
    <property type="pathway name" value="Neddylation"/>
</dbReference>
<dbReference type="Reactome" id="R-HSA-983168">
    <property type="pathway name" value="Antigen processing: Ubiquitination &amp; Proteasome degradation"/>
</dbReference>
<dbReference type="SignaLink" id="Q9UJT9"/>
<dbReference type="SIGNOR" id="Q9UJT9"/>
<dbReference type="UniPathway" id="UPA00143"/>
<dbReference type="BioGRID-ORCS" id="23194">
    <property type="hits" value="11 hits in 1194 CRISPR screens"/>
</dbReference>
<dbReference type="ChiTaRS" id="FBXL7">
    <property type="organism name" value="human"/>
</dbReference>
<dbReference type="GeneWiki" id="FBXL7"/>
<dbReference type="GenomeRNAi" id="23194"/>
<dbReference type="Pharos" id="Q9UJT9">
    <property type="development level" value="Tbio"/>
</dbReference>
<dbReference type="PRO" id="PR:Q9UJT9"/>
<dbReference type="Proteomes" id="UP000005640">
    <property type="component" value="Chromosome 5"/>
</dbReference>
<dbReference type="RNAct" id="Q9UJT9">
    <property type="molecule type" value="protein"/>
</dbReference>
<dbReference type="Bgee" id="ENSG00000183580">
    <property type="expression patterns" value="Expressed in secondary oocyte and 198 other cell types or tissues"/>
</dbReference>
<dbReference type="ExpressionAtlas" id="Q9UJT9">
    <property type="expression patterns" value="baseline and differential"/>
</dbReference>
<dbReference type="GO" id="GO:0005813">
    <property type="term" value="C:centrosome"/>
    <property type="evidence" value="ECO:0000250"/>
    <property type="project" value="UniProtKB"/>
</dbReference>
<dbReference type="GO" id="GO:0005829">
    <property type="term" value="C:cytosol"/>
    <property type="evidence" value="ECO:0000304"/>
    <property type="project" value="Reactome"/>
</dbReference>
<dbReference type="GO" id="GO:0019005">
    <property type="term" value="C:SCF ubiquitin ligase complex"/>
    <property type="evidence" value="ECO:0000314"/>
    <property type="project" value="UniProtKB"/>
</dbReference>
<dbReference type="GO" id="GO:0000151">
    <property type="term" value="C:ubiquitin ligase complex"/>
    <property type="evidence" value="ECO:0000303"/>
    <property type="project" value="UniProtKB"/>
</dbReference>
<dbReference type="GO" id="GO:0051301">
    <property type="term" value="P:cell division"/>
    <property type="evidence" value="ECO:0007669"/>
    <property type="project" value="UniProtKB-KW"/>
</dbReference>
<dbReference type="GO" id="GO:0000086">
    <property type="term" value="P:G2/M transition of mitotic cell cycle"/>
    <property type="evidence" value="ECO:0000250"/>
    <property type="project" value="UniProtKB"/>
</dbReference>
<dbReference type="GO" id="GO:0000278">
    <property type="term" value="P:mitotic cell cycle"/>
    <property type="evidence" value="ECO:0000250"/>
    <property type="project" value="UniProtKB"/>
</dbReference>
<dbReference type="GO" id="GO:0000209">
    <property type="term" value="P:protein polyubiquitination"/>
    <property type="evidence" value="ECO:0000314"/>
    <property type="project" value="UniProtKB"/>
</dbReference>
<dbReference type="GO" id="GO:0016567">
    <property type="term" value="P:protein ubiquitination"/>
    <property type="evidence" value="ECO:0000250"/>
    <property type="project" value="UniProtKB"/>
</dbReference>
<dbReference type="GO" id="GO:0031146">
    <property type="term" value="P:SCF-dependent proteasomal ubiquitin-dependent protein catabolic process"/>
    <property type="evidence" value="ECO:0000314"/>
    <property type="project" value="UniProtKB"/>
</dbReference>
<dbReference type="GO" id="GO:0006511">
    <property type="term" value="P:ubiquitin-dependent protein catabolic process"/>
    <property type="evidence" value="ECO:0000303"/>
    <property type="project" value="UniProtKB"/>
</dbReference>
<dbReference type="CDD" id="cd22120">
    <property type="entry name" value="F-box_FBXL7"/>
    <property type="match status" value="1"/>
</dbReference>
<dbReference type="FunFam" id="3.80.10.10:FF:000122">
    <property type="entry name" value="F-box/LRR-repeat protein 7 isoform X1"/>
    <property type="match status" value="1"/>
</dbReference>
<dbReference type="FunFam" id="3.80.10.10:FF:000126">
    <property type="entry name" value="F-box/LRR-repeat protein 7 isoform X1"/>
    <property type="match status" value="1"/>
</dbReference>
<dbReference type="FunFam" id="1.20.1280.50:FF:000018">
    <property type="entry name" value="F-box/LRR-repeat protein 7 isoform X2"/>
    <property type="match status" value="1"/>
</dbReference>
<dbReference type="Gene3D" id="1.20.1280.50">
    <property type="match status" value="1"/>
</dbReference>
<dbReference type="Gene3D" id="3.80.10.10">
    <property type="entry name" value="Ribonuclease Inhibitor"/>
    <property type="match status" value="2"/>
</dbReference>
<dbReference type="InterPro" id="IPR036047">
    <property type="entry name" value="F-box-like_dom_sf"/>
</dbReference>
<dbReference type="InterPro" id="IPR001810">
    <property type="entry name" value="F-box_dom"/>
</dbReference>
<dbReference type="InterPro" id="IPR001611">
    <property type="entry name" value="Leu-rich_rpt"/>
</dbReference>
<dbReference type="InterPro" id="IPR006553">
    <property type="entry name" value="Leu-rich_rpt_Cys-con_subtyp"/>
</dbReference>
<dbReference type="InterPro" id="IPR032675">
    <property type="entry name" value="LRR_dom_sf"/>
</dbReference>
<dbReference type="PANTHER" id="PTHR13318:SF50">
    <property type="entry name" value="F-BOX_LRR-REPEAT PROTEIN 7"/>
    <property type="match status" value="1"/>
</dbReference>
<dbReference type="PANTHER" id="PTHR13318">
    <property type="entry name" value="PARTNER OF PAIRED, ISOFORM B-RELATED"/>
    <property type="match status" value="1"/>
</dbReference>
<dbReference type="Pfam" id="PF12937">
    <property type="entry name" value="F-box-like"/>
    <property type="match status" value="1"/>
</dbReference>
<dbReference type="Pfam" id="PF13516">
    <property type="entry name" value="LRR_6"/>
    <property type="match status" value="4"/>
</dbReference>
<dbReference type="SMART" id="SM00256">
    <property type="entry name" value="FBOX"/>
    <property type="match status" value="1"/>
</dbReference>
<dbReference type="SMART" id="SM00367">
    <property type="entry name" value="LRR_CC"/>
    <property type="match status" value="11"/>
</dbReference>
<dbReference type="SUPFAM" id="SSF81383">
    <property type="entry name" value="F-box domain"/>
    <property type="match status" value="1"/>
</dbReference>
<dbReference type="SUPFAM" id="SSF52047">
    <property type="entry name" value="RNI-like"/>
    <property type="match status" value="1"/>
</dbReference>
<dbReference type="PROSITE" id="PS50181">
    <property type="entry name" value="FBOX"/>
    <property type="match status" value="1"/>
</dbReference>
<feature type="chain" id="PRO_0000119849" description="F-box/LRR-repeat protein 7">
    <location>
        <begin position="1"/>
        <end position="491"/>
    </location>
</feature>
<feature type="domain" description="F-box" evidence="2">
    <location>
        <begin position="111"/>
        <end position="157"/>
    </location>
</feature>
<feature type="repeat" description="LRR 1">
    <location>
        <begin position="170"/>
        <end position="195"/>
    </location>
</feature>
<feature type="repeat" description="LRR 2">
    <location>
        <begin position="196"/>
        <end position="221"/>
    </location>
</feature>
<feature type="repeat" description="LRR 3">
    <location>
        <begin position="222"/>
        <end position="247"/>
    </location>
</feature>
<feature type="repeat" description="LRR 4">
    <location>
        <begin position="253"/>
        <end position="281"/>
    </location>
</feature>
<feature type="repeat" description="LRR 5">
    <location>
        <begin position="282"/>
        <end position="307"/>
    </location>
</feature>
<feature type="repeat" description="LRR 6">
    <location>
        <begin position="308"/>
        <end position="333"/>
    </location>
</feature>
<feature type="repeat" description="LRR 7">
    <location>
        <begin position="334"/>
        <end position="359"/>
    </location>
</feature>
<feature type="repeat" description="LRR 8">
    <location>
        <begin position="360"/>
        <end position="385"/>
    </location>
</feature>
<feature type="repeat" description="LRR 9">
    <location>
        <begin position="386"/>
        <end position="411"/>
    </location>
</feature>
<feature type="repeat" description="LRR 10">
    <location>
        <begin position="412"/>
        <end position="437"/>
    </location>
</feature>
<feature type="repeat" description="LRR 11">
    <location>
        <begin position="438"/>
        <end position="463"/>
    </location>
</feature>
<feature type="region of interest" description="Disordered" evidence="3">
    <location>
        <begin position="1"/>
        <end position="79"/>
    </location>
</feature>
<feature type="compositionally biased region" description="Low complexity" evidence="3">
    <location>
        <begin position="10"/>
        <end position="26"/>
    </location>
</feature>
<feature type="compositionally biased region" description="Polar residues" evidence="3">
    <location>
        <begin position="27"/>
        <end position="55"/>
    </location>
</feature>
<feature type="splice variant" id="VSP_054751" description="In isoform 2." evidence="6">
    <location>
        <begin position="1"/>
        <end position="47"/>
    </location>
</feature>
<comment type="function">
    <text evidence="1 4 5">Substrate recognition component of a SCF (SKP1-CUL1-F-box protein) E3 ubiquitin-protein ligase complex (PubMed:25778398). During mitosis, it mediates the ubiquitination and subsequent proteasomal degradation of AURKA, causing mitotic arrest (By similarity). It also regulates mitochondrial function by mediating the ubiquitination and proteasomal degradation of the apoptosis inhibitor BIRC5 (PubMed:25778398, PubMed:28218735).</text>
</comment>
<comment type="pathway">
    <text evidence="4 5">Protein modification; protein ubiquitination.</text>
</comment>
<comment type="subunit">
    <text evidence="1 5">Part of the SCF (SKP1-CUL1-F-box) E3 ubiquitin-protein ligase complex SCF(FBXL7) composed of CUL1, SKP1, RBX1 and FBXL7 (By similarity). Interacts with AURKA; interaction takes place during mitosis but not in interphase (By similarity). Interacts with BIRC5; this interaction allows BIRC5 to be polyubiquitinated by the SCF(FBXL7) E3 ubiquitin-protein ligase complex (PubMed:28218735).</text>
</comment>
<comment type="interaction">
    <interactant intactId="EBI-914660">
        <id>Q9UJT9</id>
    </interactant>
    <interactant intactId="EBI-11977403">
        <id>A0A0C3SFZ9</id>
        <label>FCHO1</label>
    </interactant>
    <organismsDiffer>false</organismsDiffer>
    <experiments>3</experiments>
</comment>
<comment type="interaction">
    <interactant intactId="EBI-914660">
        <id>Q9UJT9</id>
    </interactant>
    <interactant intactId="EBI-742381">
        <id>Q92609</id>
        <label>TBC1D5</label>
    </interactant>
    <organismsDiffer>false</organismsDiffer>
    <experiments>3</experiments>
</comment>
<comment type="subcellular location">
    <subcellularLocation>
        <location evidence="1">Cytoplasm</location>
        <location evidence="1">Cytoskeleton</location>
        <location evidence="1">Microtubule organizing center</location>
        <location evidence="1">Centrosome</location>
    </subcellularLocation>
    <text evidence="1">Localizes to the centrosome during spindle formation.</text>
</comment>
<comment type="alternative products">
    <event type="alternative splicing"/>
    <isoform>
        <id>Q9UJT9-1</id>
        <name>1</name>
        <sequence type="displayed"/>
    </isoform>
    <isoform>
        <id>Q9UJT9-2</id>
        <name>2</name>
        <sequence type="described" ref="VSP_054751"/>
    </isoform>
</comment>
<comment type="similarity">
    <text evidence="6">Belongs to the FBXL7 family.</text>
</comment>
<comment type="sequence caution" evidence="6">
    <conflict type="erroneous initiation">
        <sequence resource="EMBL-CDS" id="BAA74863"/>
    </conflict>
    <text>Extended N-terminus.</text>
</comment>
<accession>Q9UJT9</accession>
<accession>B9EGF1</accession>
<accession>D6RDY7</accession>
<accession>O94926</accession>
<proteinExistence type="evidence at protein level"/>
<reference key="1">
    <citation type="journal article" date="2000" name="Genomics">
        <title>cDNA cloning and expression analysis of new members of the mammalian F-box protein family.</title>
        <authorList>
            <person name="Ilyin G.P."/>
            <person name="Rialland M."/>
            <person name="Pigeon C."/>
            <person name="Guguen-Guillouzo C."/>
        </authorList>
    </citation>
    <scope>NUCLEOTIDE SEQUENCE [MRNA] (ISOFORM 1)</scope>
</reference>
<reference key="2">
    <citation type="journal article" date="1998" name="DNA Res.">
        <title>Prediction of the coding sequences of unidentified human genes. XII. The complete sequences of 100 new cDNA clones from brain which code for large proteins in vitro.</title>
        <authorList>
            <person name="Nagase T."/>
            <person name="Ishikawa K."/>
            <person name="Suyama M."/>
            <person name="Kikuno R."/>
            <person name="Hirosawa M."/>
            <person name="Miyajima N."/>
            <person name="Tanaka A."/>
            <person name="Kotani H."/>
            <person name="Nomura N."/>
            <person name="Ohara O."/>
        </authorList>
    </citation>
    <scope>NUCLEOTIDE SEQUENCE [LARGE SCALE MRNA] (ISOFORM 1)</scope>
    <source>
        <tissue>Brain</tissue>
    </source>
</reference>
<reference key="3">
    <citation type="journal article" date="2002" name="DNA Res.">
        <title>Construction of expression-ready cDNA clones for KIAA genes: manual curation of 330 KIAA cDNA clones.</title>
        <authorList>
            <person name="Nakajima D."/>
            <person name="Okazaki N."/>
            <person name="Yamakawa H."/>
            <person name="Kikuno R."/>
            <person name="Ohara O."/>
            <person name="Nagase T."/>
        </authorList>
    </citation>
    <scope>SEQUENCE REVISION</scope>
</reference>
<reference key="4">
    <citation type="journal article" date="2004" name="Nature">
        <title>The DNA sequence and comparative analysis of human chromosome 5.</title>
        <authorList>
            <person name="Schmutz J."/>
            <person name="Martin J."/>
            <person name="Terry A."/>
            <person name="Couronne O."/>
            <person name="Grimwood J."/>
            <person name="Lowry S."/>
            <person name="Gordon L.A."/>
            <person name="Scott D."/>
            <person name="Xie G."/>
            <person name="Huang W."/>
            <person name="Hellsten U."/>
            <person name="Tran-Gyamfi M."/>
            <person name="She X."/>
            <person name="Prabhakar S."/>
            <person name="Aerts A."/>
            <person name="Altherr M."/>
            <person name="Bajorek E."/>
            <person name="Black S."/>
            <person name="Branscomb E."/>
            <person name="Caoile C."/>
            <person name="Challacombe J.F."/>
            <person name="Chan Y.M."/>
            <person name="Denys M."/>
            <person name="Detter J.C."/>
            <person name="Escobar J."/>
            <person name="Flowers D."/>
            <person name="Fotopulos D."/>
            <person name="Glavina T."/>
            <person name="Gomez M."/>
            <person name="Gonzales E."/>
            <person name="Goodstein D."/>
            <person name="Grigoriev I."/>
            <person name="Groza M."/>
            <person name="Hammon N."/>
            <person name="Hawkins T."/>
            <person name="Haydu L."/>
            <person name="Israni S."/>
            <person name="Jett J."/>
            <person name="Kadner K."/>
            <person name="Kimball H."/>
            <person name="Kobayashi A."/>
            <person name="Lopez F."/>
            <person name="Lou Y."/>
            <person name="Martinez D."/>
            <person name="Medina C."/>
            <person name="Morgan J."/>
            <person name="Nandkeshwar R."/>
            <person name="Noonan J.P."/>
            <person name="Pitluck S."/>
            <person name="Pollard M."/>
            <person name="Predki P."/>
            <person name="Priest J."/>
            <person name="Ramirez L."/>
            <person name="Retterer J."/>
            <person name="Rodriguez A."/>
            <person name="Rogers S."/>
            <person name="Salamov A."/>
            <person name="Salazar A."/>
            <person name="Thayer N."/>
            <person name="Tice H."/>
            <person name="Tsai M."/>
            <person name="Ustaszewska A."/>
            <person name="Vo N."/>
            <person name="Wheeler J."/>
            <person name="Wu K."/>
            <person name="Yang J."/>
            <person name="Dickson M."/>
            <person name="Cheng J.-F."/>
            <person name="Eichler E.E."/>
            <person name="Olsen A."/>
            <person name="Pennacchio L.A."/>
            <person name="Rokhsar D.S."/>
            <person name="Richardson P."/>
            <person name="Lucas S.M."/>
            <person name="Myers R.M."/>
            <person name="Rubin E.M."/>
        </authorList>
    </citation>
    <scope>NUCLEOTIDE SEQUENCE [LARGE SCALE GENOMIC DNA]</scope>
</reference>
<reference key="5">
    <citation type="submission" date="2005-09" db="EMBL/GenBank/DDBJ databases">
        <authorList>
            <person name="Mural R.J."/>
            <person name="Istrail S."/>
            <person name="Sutton G.G."/>
            <person name="Florea L."/>
            <person name="Halpern A.L."/>
            <person name="Mobarry C.M."/>
            <person name="Lippert R."/>
            <person name="Walenz B."/>
            <person name="Shatkay H."/>
            <person name="Dew I."/>
            <person name="Miller J.R."/>
            <person name="Flanigan M.J."/>
            <person name="Edwards N.J."/>
            <person name="Bolanos R."/>
            <person name="Fasulo D."/>
            <person name="Halldorsson B.V."/>
            <person name="Hannenhalli S."/>
            <person name="Turner R."/>
            <person name="Yooseph S."/>
            <person name="Lu F."/>
            <person name="Nusskern D.R."/>
            <person name="Shue B.C."/>
            <person name="Zheng X.H."/>
            <person name="Zhong F."/>
            <person name="Delcher A.L."/>
            <person name="Huson D.H."/>
            <person name="Kravitz S.A."/>
            <person name="Mouchard L."/>
            <person name="Reinert K."/>
            <person name="Remington K.A."/>
            <person name="Clark A.G."/>
            <person name="Waterman M.S."/>
            <person name="Eichler E.E."/>
            <person name="Adams M.D."/>
            <person name="Hunkapiller M.W."/>
            <person name="Myers E.W."/>
            <person name="Venter J.C."/>
        </authorList>
    </citation>
    <scope>NUCLEOTIDE SEQUENCE [LARGE SCALE GENOMIC DNA]</scope>
</reference>
<reference key="6">
    <citation type="journal article" date="2004" name="Genome Res.">
        <title>The status, quality, and expansion of the NIH full-length cDNA project: the Mammalian Gene Collection (MGC).</title>
        <authorList>
            <consortium name="The MGC Project Team"/>
        </authorList>
    </citation>
    <scope>NUCLEOTIDE SEQUENCE [LARGE SCALE MRNA] (ISOFORM 1)</scope>
    <source>
        <tissue>Brain</tissue>
        <tissue>Testis</tissue>
    </source>
</reference>
<reference key="7">
    <citation type="journal article" date="1999" name="Curr. Biol.">
        <title>Identification of a family of human F-box proteins.</title>
        <authorList>
            <person name="Cenciarelli C."/>
            <person name="Chiaur D.S."/>
            <person name="Guardavaccaro D."/>
            <person name="Parks W."/>
            <person name="Vidal M."/>
            <person name="Pagano M."/>
        </authorList>
    </citation>
    <scope>NUCLEOTIDE SEQUENCE [MRNA] OF 41-483 (ISOFORM 1)</scope>
</reference>
<reference key="8">
    <citation type="journal article" date="2015" name="J. Biol. Chem.">
        <title>The Proapoptotic F-box Protein Fbxl7 Regulates Mitochondrial Function by Mediating the Ubiquitylation and Proteasomal Degradation of Survivin.</title>
        <authorList>
            <person name="Liu Y."/>
            <person name="Lear T."/>
            <person name="Iannone O."/>
            <person name="Shiva S."/>
            <person name="Corey C."/>
            <person name="Rajbhandari S."/>
            <person name="Jerome J."/>
            <person name="Chen B.B."/>
            <person name="Mallampalli R.K."/>
        </authorList>
    </citation>
    <scope>FUNCTION</scope>
</reference>
<reference key="9">
    <citation type="journal article" date="2017" name="Oncogenesis">
        <title>Aurora kinase A regulates Survivin stability through targeting FBXL7 in gastric cancer drug resistance and prognosis.</title>
        <authorList>
            <person name="Kamran M."/>
            <person name="Long Z.J."/>
            <person name="Xu D."/>
            <person name="Lv S.S."/>
            <person name="Liu B."/>
            <person name="Wang C.L."/>
            <person name="Xu J."/>
            <person name="Lam E.W."/>
            <person name="Liu Q."/>
        </authorList>
    </citation>
    <scope>FUNCTION</scope>
    <scope>INTERACTION WITH BIRC5</scope>
</reference>
<keyword id="KW-0025">Alternative splicing</keyword>
<keyword id="KW-0131">Cell cycle</keyword>
<keyword id="KW-0132">Cell division</keyword>
<keyword id="KW-0963">Cytoplasm</keyword>
<keyword id="KW-0206">Cytoskeleton</keyword>
<keyword id="KW-0433">Leucine-rich repeat</keyword>
<keyword id="KW-0498">Mitosis</keyword>
<keyword id="KW-1267">Proteomics identification</keyword>
<keyword id="KW-1185">Reference proteome</keyword>
<keyword id="KW-0677">Repeat</keyword>
<keyword id="KW-0833">Ubl conjugation pathway</keyword>
<evidence type="ECO:0000250" key="1">
    <source>
        <dbReference type="UniProtKB" id="Q5BJ29"/>
    </source>
</evidence>
<evidence type="ECO:0000255" key="2">
    <source>
        <dbReference type="PROSITE-ProRule" id="PRU00080"/>
    </source>
</evidence>
<evidence type="ECO:0000256" key="3">
    <source>
        <dbReference type="SAM" id="MobiDB-lite"/>
    </source>
</evidence>
<evidence type="ECO:0000269" key="4">
    <source>
    </source>
</evidence>
<evidence type="ECO:0000269" key="5">
    <source>
    </source>
</evidence>
<evidence type="ECO:0000305" key="6"/>
<organism>
    <name type="scientific">Homo sapiens</name>
    <name type="common">Human</name>
    <dbReference type="NCBI Taxonomy" id="9606"/>
    <lineage>
        <taxon>Eukaryota</taxon>
        <taxon>Metazoa</taxon>
        <taxon>Chordata</taxon>
        <taxon>Craniata</taxon>
        <taxon>Vertebrata</taxon>
        <taxon>Euteleostomi</taxon>
        <taxon>Mammalia</taxon>
        <taxon>Eutheria</taxon>
        <taxon>Euarchontoglires</taxon>
        <taxon>Primates</taxon>
        <taxon>Haplorrhini</taxon>
        <taxon>Catarrhini</taxon>
        <taxon>Hominidae</taxon>
        <taxon>Homo</taxon>
    </lineage>
</organism>